<keyword id="KW-0328">Glycosyltransferase</keyword>
<keyword id="KW-0460">Magnesium</keyword>
<keyword id="KW-0665">Pyrimidine biosynthesis</keyword>
<keyword id="KW-0808">Transferase</keyword>
<feature type="chain" id="PRO_1000138755" description="Orotate phosphoribosyltransferase">
    <location>
        <begin position="1"/>
        <end position="216"/>
    </location>
</feature>
<feature type="binding site" description="in other chain" evidence="1">
    <location>
        <position position="30"/>
    </location>
    <ligand>
        <name>5-phospho-alpha-D-ribose 1-diphosphate</name>
        <dbReference type="ChEBI" id="CHEBI:58017"/>
        <note>ligand shared between dimeric partners</note>
    </ligand>
</feature>
<feature type="binding site" evidence="1">
    <location>
        <begin position="38"/>
        <end position="39"/>
    </location>
    <ligand>
        <name>orotate</name>
        <dbReference type="ChEBI" id="CHEBI:30839"/>
    </ligand>
</feature>
<feature type="binding site" description="in other chain" evidence="1">
    <location>
        <begin position="75"/>
        <end position="76"/>
    </location>
    <ligand>
        <name>5-phospho-alpha-D-ribose 1-diphosphate</name>
        <dbReference type="ChEBI" id="CHEBI:58017"/>
        <note>ligand shared between dimeric partners</note>
    </ligand>
</feature>
<feature type="binding site" evidence="1">
    <location>
        <position position="102"/>
    </location>
    <ligand>
        <name>5-phospho-alpha-D-ribose 1-diphosphate</name>
        <dbReference type="ChEBI" id="CHEBI:58017"/>
        <note>ligand shared between dimeric partners</note>
    </ligand>
</feature>
<feature type="binding site" description="in other chain" evidence="1">
    <location>
        <position position="103"/>
    </location>
    <ligand>
        <name>5-phospho-alpha-D-ribose 1-diphosphate</name>
        <dbReference type="ChEBI" id="CHEBI:58017"/>
        <note>ligand shared between dimeric partners</note>
    </ligand>
</feature>
<feature type="binding site" evidence="1">
    <location>
        <position position="106"/>
    </location>
    <ligand>
        <name>5-phospho-alpha-D-ribose 1-diphosphate</name>
        <dbReference type="ChEBI" id="CHEBI:58017"/>
        <note>ligand shared between dimeric partners</note>
    </ligand>
</feature>
<feature type="binding site" evidence="1">
    <location>
        <position position="108"/>
    </location>
    <ligand>
        <name>5-phospho-alpha-D-ribose 1-diphosphate</name>
        <dbReference type="ChEBI" id="CHEBI:58017"/>
        <note>ligand shared between dimeric partners</note>
    </ligand>
</feature>
<feature type="binding site" description="in other chain" evidence="1">
    <location>
        <begin position="128"/>
        <end position="136"/>
    </location>
    <ligand>
        <name>5-phospho-alpha-D-ribose 1-diphosphate</name>
        <dbReference type="ChEBI" id="CHEBI:58017"/>
        <note>ligand shared between dimeric partners</note>
    </ligand>
</feature>
<feature type="binding site" evidence="1">
    <location>
        <position position="132"/>
    </location>
    <ligand>
        <name>orotate</name>
        <dbReference type="ChEBI" id="CHEBI:30839"/>
    </ligand>
</feature>
<feature type="binding site" evidence="1">
    <location>
        <position position="160"/>
    </location>
    <ligand>
        <name>orotate</name>
        <dbReference type="ChEBI" id="CHEBI:30839"/>
    </ligand>
</feature>
<name>PYRE_ACIBC</name>
<proteinExistence type="inferred from homology"/>
<evidence type="ECO:0000255" key="1">
    <source>
        <dbReference type="HAMAP-Rule" id="MF_01208"/>
    </source>
</evidence>
<dbReference type="EC" id="2.4.2.10" evidence="1"/>
<dbReference type="EMBL" id="CP000863">
    <property type="protein sequence ID" value="ACC58847.1"/>
    <property type="molecule type" value="Genomic_DNA"/>
</dbReference>
<dbReference type="RefSeq" id="WP_000211303.1">
    <property type="nucleotide sequence ID" value="NZ_CP031380.1"/>
</dbReference>
<dbReference type="SMR" id="B2I1J9"/>
<dbReference type="GeneID" id="92895583"/>
<dbReference type="KEGG" id="abc:ACICU_03538"/>
<dbReference type="HOGENOM" id="CLU_074878_0_1_6"/>
<dbReference type="UniPathway" id="UPA00070">
    <property type="reaction ID" value="UER00119"/>
</dbReference>
<dbReference type="Proteomes" id="UP000008839">
    <property type="component" value="Chromosome"/>
</dbReference>
<dbReference type="GO" id="GO:0005737">
    <property type="term" value="C:cytoplasm"/>
    <property type="evidence" value="ECO:0007669"/>
    <property type="project" value="TreeGrafter"/>
</dbReference>
<dbReference type="GO" id="GO:0000287">
    <property type="term" value="F:magnesium ion binding"/>
    <property type="evidence" value="ECO:0007669"/>
    <property type="project" value="UniProtKB-UniRule"/>
</dbReference>
<dbReference type="GO" id="GO:0004588">
    <property type="term" value="F:orotate phosphoribosyltransferase activity"/>
    <property type="evidence" value="ECO:0007669"/>
    <property type="project" value="UniProtKB-UniRule"/>
</dbReference>
<dbReference type="GO" id="GO:0006207">
    <property type="term" value="P:'de novo' pyrimidine nucleobase biosynthetic process"/>
    <property type="evidence" value="ECO:0007669"/>
    <property type="project" value="TreeGrafter"/>
</dbReference>
<dbReference type="GO" id="GO:0044205">
    <property type="term" value="P:'de novo' UMP biosynthetic process"/>
    <property type="evidence" value="ECO:0007669"/>
    <property type="project" value="UniProtKB-UniRule"/>
</dbReference>
<dbReference type="GO" id="GO:0046132">
    <property type="term" value="P:pyrimidine ribonucleoside biosynthetic process"/>
    <property type="evidence" value="ECO:0007669"/>
    <property type="project" value="TreeGrafter"/>
</dbReference>
<dbReference type="CDD" id="cd06223">
    <property type="entry name" value="PRTases_typeI"/>
    <property type="match status" value="1"/>
</dbReference>
<dbReference type="FunFam" id="3.40.50.2020:FF:000008">
    <property type="entry name" value="Orotate phosphoribosyltransferase"/>
    <property type="match status" value="1"/>
</dbReference>
<dbReference type="Gene3D" id="3.40.50.2020">
    <property type="match status" value="1"/>
</dbReference>
<dbReference type="HAMAP" id="MF_01208">
    <property type="entry name" value="PyrE"/>
    <property type="match status" value="1"/>
</dbReference>
<dbReference type="InterPro" id="IPR023031">
    <property type="entry name" value="OPRT"/>
</dbReference>
<dbReference type="InterPro" id="IPR004467">
    <property type="entry name" value="Or_phspho_trans_dom"/>
</dbReference>
<dbReference type="InterPro" id="IPR000836">
    <property type="entry name" value="PRibTrfase_dom"/>
</dbReference>
<dbReference type="InterPro" id="IPR029057">
    <property type="entry name" value="PRTase-like"/>
</dbReference>
<dbReference type="NCBIfam" id="TIGR00336">
    <property type="entry name" value="pyrE"/>
    <property type="match status" value="1"/>
</dbReference>
<dbReference type="PANTHER" id="PTHR46683">
    <property type="entry name" value="OROTATE PHOSPHORIBOSYLTRANSFERASE 1-RELATED"/>
    <property type="match status" value="1"/>
</dbReference>
<dbReference type="PANTHER" id="PTHR46683:SF1">
    <property type="entry name" value="OROTATE PHOSPHORIBOSYLTRANSFERASE 1-RELATED"/>
    <property type="match status" value="1"/>
</dbReference>
<dbReference type="Pfam" id="PF00156">
    <property type="entry name" value="Pribosyltran"/>
    <property type="match status" value="1"/>
</dbReference>
<dbReference type="SUPFAM" id="SSF53271">
    <property type="entry name" value="PRTase-like"/>
    <property type="match status" value="1"/>
</dbReference>
<comment type="function">
    <text evidence="1">Catalyzes the transfer of a ribosyl phosphate group from 5-phosphoribose 1-diphosphate to orotate, leading to the formation of orotidine monophosphate (OMP).</text>
</comment>
<comment type="catalytic activity">
    <reaction evidence="1">
        <text>orotidine 5'-phosphate + diphosphate = orotate + 5-phospho-alpha-D-ribose 1-diphosphate</text>
        <dbReference type="Rhea" id="RHEA:10380"/>
        <dbReference type="ChEBI" id="CHEBI:30839"/>
        <dbReference type="ChEBI" id="CHEBI:33019"/>
        <dbReference type="ChEBI" id="CHEBI:57538"/>
        <dbReference type="ChEBI" id="CHEBI:58017"/>
        <dbReference type="EC" id="2.4.2.10"/>
    </reaction>
</comment>
<comment type="cofactor">
    <cofactor evidence="1">
        <name>Mg(2+)</name>
        <dbReference type="ChEBI" id="CHEBI:18420"/>
    </cofactor>
</comment>
<comment type="pathway">
    <text evidence="1">Pyrimidine metabolism; UMP biosynthesis via de novo pathway; UMP from orotate: step 1/2.</text>
</comment>
<comment type="subunit">
    <text evidence="1">Homodimer.</text>
</comment>
<comment type="similarity">
    <text evidence="1">Belongs to the purine/pyrimidine phosphoribosyltransferase family. PyrE subfamily.</text>
</comment>
<protein>
    <recommendedName>
        <fullName evidence="1">Orotate phosphoribosyltransferase</fullName>
        <shortName evidence="1">OPRT</shortName>
        <shortName evidence="1">OPRTase</shortName>
        <ecNumber evidence="1">2.4.2.10</ecNumber>
    </recommendedName>
</protein>
<accession>B2I1J9</accession>
<organism>
    <name type="scientific">Acinetobacter baumannii (strain ACICU)</name>
    <dbReference type="NCBI Taxonomy" id="405416"/>
    <lineage>
        <taxon>Bacteria</taxon>
        <taxon>Pseudomonadati</taxon>
        <taxon>Pseudomonadota</taxon>
        <taxon>Gammaproteobacteria</taxon>
        <taxon>Moraxellales</taxon>
        <taxon>Moraxellaceae</taxon>
        <taxon>Acinetobacter</taxon>
        <taxon>Acinetobacter calcoaceticus/baumannii complex</taxon>
    </lineage>
</organism>
<gene>
    <name evidence="1" type="primary">pyrE</name>
    <name type="ordered locus">ACICU_03538</name>
</gene>
<sequence>MTTPVSFHPQAFIELALSRGVLKFGEFTLKSGRVSPYFFNAGLLNDGEALSLLAQGYADKLTQCENVDVIFGPAYKGIPFVAATAVALSQTHNKSVPWGFNRKEAKDHGEGGVLVGAAVEGKKVWIIDDVITAGTAIREVVTILKNAGATIAGVLVALDRQERGQGELSAIQEVQKELEIPVHALITMKDLMDYLEAKGEKEALANMQAYREKYGI</sequence>
<reference key="1">
    <citation type="journal article" date="2008" name="Antimicrob. Agents Chemother.">
        <title>Whole-genome pyrosequencing of an epidemic multidrug-resistant Acinetobacter baumannii strain belonging to the European clone II group.</title>
        <authorList>
            <person name="Iacono M."/>
            <person name="Villa L."/>
            <person name="Fortini D."/>
            <person name="Bordoni R."/>
            <person name="Imperi F."/>
            <person name="Bonnal R.J."/>
            <person name="Sicheritz-Ponten T."/>
            <person name="De Bellis G."/>
            <person name="Visca P."/>
            <person name="Cassone A."/>
            <person name="Carattoli A."/>
        </authorList>
    </citation>
    <scope>NUCLEOTIDE SEQUENCE [LARGE SCALE GENOMIC DNA]</scope>
    <source>
        <strain>ACICU</strain>
    </source>
</reference>